<dbReference type="EMBL" id="AF022186">
    <property type="protein sequence ID" value="AAF12911.1"/>
    <property type="molecule type" value="Genomic_DNA"/>
</dbReference>
<dbReference type="RefSeq" id="NP_045183.1">
    <property type="nucleotide sequence ID" value="NC_001840.1"/>
</dbReference>
<dbReference type="SMR" id="Q9TLT6"/>
<dbReference type="GeneID" id="800167"/>
<dbReference type="GO" id="GO:0009507">
    <property type="term" value="C:chloroplast"/>
    <property type="evidence" value="ECO:0007669"/>
    <property type="project" value="UniProtKB-SubCell"/>
</dbReference>
<dbReference type="GO" id="GO:0005763">
    <property type="term" value="C:mitochondrial small ribosomal subunit"/>
    <property type="evidence" value="ECO:0007669"/>
    <property type="project" value="TreeGrafter"/>
</dbReference>
<dbReference type="GO" id="GO:0019843">
    <property type="term" value="F:rRNA binding"/>
    <property type="evidence" value="ECO:0007669"/>
    <property type="project" value="UniProtKB-UniRule"/>
</dbReference>
<dbReference type="GO" id="GO:0003735">
    <property type="term" value="F:structural constituent of ribosome"/>
    <property type="evidence" value="ECO:0007669"/>
    <property type="project" value="InterPro"/>
</dbReference>
<dbReference type="GO" id="GO:0000028">
    <property type="term" value="P:ribosomal small subunit assembly"/>
    <property type="evidence" value="ECO:0007669"/>
    <property type="project" value="TreeGrafter"/>
</dbReference>
<dbReference type="GO" id="GO:0006412">
    <property type="term" value="P:translation"/>
    <property type="evidence" value="ECO:0007669"/>
    <property type="project" value="UniProtKB-UniRule"/>
</dbReference>
<dbReference type="FunFam" id="3.30.860.10:FF:000001">
    <property type="entry name" value="30S ribosomal protein S19"/>
    <property type="match status" value="1"/>
</dbReference>
<dbReference type="Gene3D" id="3.30.860.10">
    <property type="entry name" value="30s Ribosomal Protein S19, Chain A"/>
    <property type="match status" value="1"/>
</dbReference>
<dbReference type="HAMAP" id="MF_00531">
    <property type="entry name" value="Ribosomal_uS19"/>
    <property type="match status" value="1"/>
</dbReference>
<dbReference type="InterPro" id="IPR002222">
    <property type="entry name" value="Ribosomal_uS19"/>
</dbReference>
<dbReference type="InterPro" id="IPR005732">
    <property type="entry name" value="Ribosomal_uS19_bac-type"/>
</dbReference>
<dbReference type="InterPro" id="IPR020934">
    <property type="entry name" value="Ribosomal_uS19_CS"/>
</dbReference>
<dbReference type="InterPro" id="IPR023575">
    <property type="entry name" value="Ribosomal_uS19_SF"/>
</dbReference>
<dbReference type="NCBIfam" id="TIGR01050">
    <property type="entry name" value="rpsS_bact"/>
    <property type="match status" value="1"/>
</dbReference>
<dbReference type="PANTHER" id="PTHR11880">
    <property type="entry name" value="RIBOSOMAL PROTEIN S19P FAMILY MEMBER"/>
    <property type="match status" value="1"/>
</dbReference>
<dbReference type="PANTHER" id="PTHR11880:SF8">
    <property type="entry name" value="SMALL RIBOSOMAL SUBUNIT PROTEIN US19M"/>
    <property type="match status" value="1"/>
</dbReference>
<dbReference type="Pfam" id="PF00203">
    <property type="entry name" value="Ribosomal_S19"/>
    <property type="match status" value="1"/>
</dbReference>
<dbReference type="PIRSF" id="PIRSF002144">
    <property type="entry name" value="Ribosomal_S19"/>
    <property type="match status" value="1"/>
</dbReference>
<dbReference type="PRINTS" id="PR00975">
    <property type="entry name" value="RIBOSOMALS19"/>
</dbReference>
<dbReference type="SUPFAM" id="SSF54570">
    <property type="entry name" value="Ribosomal protein S19"/>
    <property type="match status" value="1"/>
</dbReference>
<dbReference type="PROSITE" id="PS00323">
    <property type="entry name" value="RIBOSOMAL_S19"/>
    <property type="match status" value="1"/>
</dbReference>
<geneLocation type="chloroplast"/>
<gene>
    <name evidence="1" type="primary">rps19</name>
</gene>
<organism>
    <name type="scientific">Cyanidium caldarium</name>
    <name type="common">Red alga</name>
    <dbReference type="NCBI Taxonomy" id="2771"/>
    <lineage>
        <taxon>Eukaryota</taxon>
        <taxon>Rhodophyta</taxon>
        <taxon>Bangiophyceae</taxon>
        <taxon>Cyanidiales</taxon>
        <taxon>Cyanidiaceae</taxon>
        <taxon>Cyanidium</taxon>
    </lineage>
</organism>
<reference key="1">
    <citation type="journal article" date="2000" name="J. Mol. Evol.">
        <title>The structure and gene repertoire of an ancient red algal plastid genome.</title>
        <authorList>
            <person name="Gloeckner G."/>
            <person name="Rosenthal A."/>
            <person name="Valentin K.-U."/>
        </authorList>
    </citation>
    <scope>NUCLEOTIDE SEQUENCE [LARGE SCALE GENOMIC DNA]</scope>
    <source>
        <strain>RK-1</strain>
    </source>
</reference>
<sequence length="92" mass="10510">MSRSIKKGPYVHFKLLKNTNNLNLSNSKRVIKTWSRSSVILPSMVGHTIAVHNGKIHVPIFISDQMVGHKLGEFAFTRSFRSHAKIDKKIRK</sequence>
<proteinExistence type="inferred from homology"/>
<comment type="function">
    <text evidence="1">Protein S19 forms a complex with S13 that binds strongly to the 16S ribosomal RNA.</text>
</comment>
<comment type="subcellular location">
    <subcellularLocation>
        <location>Plastid</location>
        <location>Chloroplast</location>
    </subcellularLocation>
</comment>
<comment type="similarity">
    <text evidence="1">Belongs to the universal ribosomal protein uS19 family.</text>
</comment>
<evidence type="ECO:0000255" key="1">
    <source>
        <dbReference type="HAMAP-Rule" id="MF_00531"/>
    </source>
</evidence>
<evidence type="ECO:0000305" key="2"/>
<feature type="chain" id="PRO_0000129960" description="Small ribosomal subunit protein uS19c">
    <location>
        <begin position="1"/>
        <end position="92"/>
    </location>
</feature>
<accession>Q9TLT6</accession>
<name>RR19_CYACA</name>
<protein>
    <recommendedName>
        <fullName evidence="1">Small ribosomal subunit protein uS19c</fullName>
    </recommendedName>
    <alternativeName>
        <fullName evidence="2">30S ribosomal protein S19, chloroplastic</fullName>
    </alternativeName>
</protein>
<keyword id="KW-0150">Chloroplast</keyword>
<keyword id="KW-0934">Plastid</keyword>
<keyword id="KW-0687">Ribonucleoprotein</keyword>
<keyword id="KW-0689">Ribosomal protein</keyword>
<keyword id="KW-0694">RNA-binding</keyword>
<keyword id="KW-0699">rRNA-binding</keyword>